<evidence type="ECO:0000255" key="1">
    <source>
        <dbReference type="HAMAP-Rule" id="MF_00156"/>
    </source>
</evidence>
<gene>
    <name evidence="1" type="primary">panB</name>
    <name type="ordered locus">Pcal_1504</name>
</gene>
<feature type="chain" id="PRO_0000297425" description="3-methyl-2-oxobutanoate hydroxymethyltransferase">
    <location>
        <begin position="1"/>
        <end position="265"/>
    </location>
</feature>
<feature type="active site" description="Proton acceptor" evidence="1">
    <location>
        <position position="183"/>
    </location>
</feature>
<feature type="binding site" evidence="1">
    <location>
        <begin position="46"/>
        <end position="47"/>
    </location>
    <ligand>
        <name>3-methyl-2-oxobutanoate</name>
        <dbReference type="ChEBI" id="CHEBI:11851"/>
    </ligand>
</feature>
<feature type="binding site" evidence="1">
    <location>
        <position position="46"/>
    </location>
    <ligand>
        <name>Mg(2+)</name>
        <dbReference type="ChEBI" id="CHEBI:18420"/>
    </ligand>
</feature>
<feature type="binding site" evidence="1">
    <location>
        <position position="85"/>
    </location>
    <ligand>
        <name>3-methyl-2-oxobutanoate</name>
        <dbReference type="ChEBI" id="CHEBI:11851"/>
    </ligand>
</feature>
<feature type="binding site" evidence="1">
    <location>
        <position position="85"/>
    </location>
    <ligand>
        <name>Mg(2+)</name>
        <dbReference type="ChEBI" id="CHEBI:18420"/>
    </ligand>
</feature>
<feature type="binding site" evidence="1">
    <location>
        <position position="114"/>
    </location>
    <ligand>
        <name>3-methyl-2-oxobutanoate</name>
        <dbReference type="ChEBI" id="CHEBI:11851"/>
    </ligand>
</feature>
<feature type="binding site" evidence="1">
    <location>
        <position position="116"/>
    </location>
    <ligand>
        <name>Mg(2+)</name>
        <dbReference type="ChEBI" id="CHEBI:18420"/>
    </ligand>
</feature>
<sequence length="265" mass="28646">MEKRKVTIRHFLEAKGSRKLAMVTAYDYPTARLVDEAGVDGILVGDSLGMVVLGYENTLRVTLRDMVAHVAAVARARPRALVVADMPFMTYETGPRDALRAAAKLVRAGAEAVKPEGGVEIVDVVEKLTKTGVPVMGHIGLNPQRVLTLGGFRMVGKDEEARRKVLEDAKALQEAGAFALVVEFVPASLAKEVTEAVKIPTICIGAGPHCDGQILVLHDIIGLSEKPPSFAKRYADVASIIREAVAKYVAEVREGKFPTPEHYRP</sequence>
<organism>
    <name type="scientific">Pyrobaculum calidifontis (strain DSM 21063 / JCM 11548 / VA1)</name>
    <dbReference type="NCBI Taxonomy" id="410359"/>
    <lineage>
        <taxon>Archaea</taxon>
        <taxon>Thermoproteota</taxon>
        <taxon>Thermoprotei</taxon>
        <taxon>Thermoproteales</taxon>
        <taxon>Thermoproteaceae</taxon>
        <taxon>Pyrobaculum</taxon>
    </lineage>
</organism>
<comment type="function">
    <text evidence="1">Catalyzes the reversible reaction in which hydroxymethyl group from 5,10-methylenetetrahydrofolate is transferred onto alpha-ketoisovalerate to form ketopantoate.</text>
</comment>
<comment type="catalytic activity">
    <reaction evidence="1">
        <text>3-methyl-2-oxobutanoate + (6R)-5,10-methylene-5,6,7,8-tetrahydrofolate + H2O = 2-dehydropantoate + (6S)-5,6,7,8-tetrahydrofolate</text>
        <dbReference type="Rhea" id="RHEA:11824"/>
        <dbReference type="ChEBI" id="CHEBI:11561"/>
        <dbReference type="ChEBI" id="CHEBI:11851"/>
        <dbReference type="ChEBI" id="CHEBI:15377"/>
        <dbReference type="ChEBI" id="CHEBI:15636"/>
        <dbReference type="ChEBI" id="CHEBI:57453"/>
        <dbReference type="EC" id="2.1.2.11"/>
    </reaction>
</comment>
<comment type="cofactor">
    <cofactor evidence="1">
        <name>Mg(2+)</name>
        <dbReference type="ChEBI" id="CHEBI:18420"/>
    </cofactor>
    <text evidence="1">Binds 1 Mg(2+) ion per subunit.</text>
</comment>
<comment type="pathway">
    <text evidence="1">Cofactor biosynthesis; coenzyme A biosynthesis.</text>
</comment>
<comment type="subunit">
    <text evidence="1">Homodecamer; pentamer of dimers.</text>
</comment>
<comment type="subcellular location">
    <subcellularLocation>
        <location evidence="1">Cytoplasm</location>
    </subcellularLocation>
</comment>
<comment type="similarity">
    <text evidence="1">Belongs to the PanB family.</text>
</comment>
<accession>A3MWA6</accession>
<keyword id="KW-0173">Coenzyme A biosynthesis</keyword>
<keyword id="KW-0963">Cytoplasm</keyword>
<keyword id="KW-0460">Magnesium</keyword>
<keyword id="KW-0479">Metal-binding</keyword>
<keyword id="KW-0808">Transferase</keyword>
<dbReference type="EC" id="2.1.2.11" evidence="1"/>
<dbReference type="EMBL" id="CP000561">
    <property type="protein sequence ID" value="ABO08923.1"/>
    <property type="molecule type" value="Genomic_DNA"/>
</dbReference>
<dbReference type="RefSeq" id="WP_011850181.1">
    <property type="nucleotide sequence ID" value="NC_009073.1"/>
</dbReference>
<dbReference type="SMR" id="A3MWA6"/>
<dbReference type="STRING" id="410359.Pcal_1504"/>
<dbReference type="GeneID" id="4909114"/>
<dbReference type="KEGG" id="pcl:Pcal_1504"/>
<dbReference type="eggNOG" id="arCOG00584">
    <property type="taxonomic scope" value="Archaea"/>
</dbReference>
<dbReference type="HOGENOM" id="CLU_036645_1_0_2"/>
<dbReference type="OrthoDB" id="8414at2157"/>
<dbReference type="UniPathway" id="UPA00241"/>
<dbReference type="Proteomes" id="UP000001431">
    <property type="component" value="Chromosome"/>
</dbReference>
<dbReference type="GO" id="GO:0005737">
    <property type="term" value="C:cytoplasm"/>
    <property type="evidence" value="ECO:0007669"/>
    <property type="project" value="UniProtKB-SubCell"/>
</dbReference>
<dbReference type="GO" id="GO:0003864">
    <property type="term" value="F:3-methyl-2-oxobutanoate hydroxymethyltransferase activity"/>
    <property type="evidence" value="ECO:0007669"/>
    <property type="project" value="UniProtKB-UniRule"/>
</dbReference>
<dbReference type="GO" id="GO:0000287">
    <property type="term" value="F:magnesium ion binding"/>
    <property type="evidence" value="ECO:0007669"/>
    <property type="project" value="TreeGrafter"/>
</dbReference>
<dbReference type="GO" id="GO:0015937">
    <property type="term" value="P:coenzyme A biosynthetic process"/>
    <property type="evidence" value="ECO:0007669"/>
    <property type="project" value="UniProtKB-UniRule"/>
</dbReference>
<dbReference type="GO" id="GO:0015940">
    <property type="term" value="P:pantothenate biosynthetic process"/>
    <property type="evidence" value="ECO:0007669"/>
    <property type="project" value="InterPro"/>
</dbReference>
<dbReference type="CDD" id="cd06557">
    <property type="entry name" value="KPHMT-like"/>
    <property type="match status" value="1"/>
</dbReference>
<dbReference type="FunFam" id="3.20.20.60:FF:000003">
    <property type="entry name" value="3-methyl-2-oxobutanoate hydroxymethyltransferase"/>
    <property type="match status" value="1"/>
</dbReference>
<dbReference type="Gene3D" id="3.20.20.60">
    <property type="entry name" value="Phosphoenolpyruvate-binding domains"/>
    <property type="match status" value="1"/>
</dbReference>
<dbReference type="HAMAP" id="MF_00156">
    <property type="entry name" value="PanB"/>
    <property type="match status" value="1"/>
</dbReference>
<dbReference type="InterPro" id="IPR003700">
    <property type="entry name" value="Pantoate_hydroxy_MeTrfase"/>
</dbReference>
<dbReference type="InterPro" id="IPR015813">
    <property type="entry name" value="Pyrv/PenolPyrv_kinase-like_dom"/>
</dbReference>
<dbReference type="InterPro" id="IPR040442">
    <property type="entry name" value="Pyrv_kinase-like_dom_sf"/>
</dbReference>
<dbReference type="NCBIfam" id="TIGR00222">
    <property type="entry name" value="panB"/>
    <property type="match status" value="1"/>
</dbReference>
<dbReference type="NCBIfam" id="NF001452">
    <property type="entry name" value="PRK00311.1"/>
    <property type="match status" value="1"/>
</dbReference>
<dbReference type="PANTHER" id="PTHR20881">
    <property type="entry name" value="3-METHYL-2-OXOBUTANOATE HYDROXYMETHYLTRANSFERASE"/>
    <property type="match status" value="1"/>
</dbReference>
<dbReference type="PANTHER" id="PTHR20881:SF0">
    <property type="entry name" value="3-METHYL-2-OXOBUTANOATE HYDROXYMETHYLTRANSFERASE"/>
    <property type="match status" value="1"/>
</dbReference>
<dbReference type="Pfam" id="PF02548">
    <property type="entry name" value="Pantoate_transf"/>
    <property type="match status" value="1"/>
</dbReference>
<dbReference type="PIRSF" id="PIRSF000388">
    <property type="entry name" value="Pantoate_hydroxy_MeTrfase"/>
    <property type="match status" value="1"/>
</dbReference>
<dbReference type="SUPFAM" id="SSF51621">
    <property type="entry name" value="Phosphoenolpyruvate/pyruvate domain"/>
    <property type="match status" value="1"/>
</dbReference>
<protein>
    <recommendedName>
        <fullName evidence="1">3-methyl-2-oxobutanoate hydroxymethyltransferase</fullName>
        <ecNumber evidence="1">2.1.2.11</ecNumber>
    </recommendedName>
    <alternativeName>
        <fullName evidence="1">Ketopantoate hydroxymethyltransferase</fullName>
        <shortName evidence="1">KPHMT</shortName>
    </alternativeName>
</protein>
<name>PANB_PYRCJ</name>
<reference key="1">
    <citation type="submission" date="2007-02" db="EMBL/GenBank/DDBJ databases">
        <title>Complete sequence of Pyrobaculum calidifontis JCM 11548.</title>
        <authorList>
            <consortium name="US DOE Joint Genome Institute"/>
            <person name="Copeland A."/>
            <person name="Lucas S."/>
            <person name="Lapidus A."/>
            <person name="Barry K."/>
            <person name="Glavina del Rio T."/>
            <person name="Dalin E."/>
            <person name="Tice H."/>
            <person name="Pitluck S."/>
            <person name="Chain P."/>
            <person name="Malfatti S."/>
            <person name="Shin M."/>
            <person name="Vergez L."/>
            <person name="Schmutz J."/>
            <person name="Larimer F."/>
            <person name="Land M."/>
            <person name="Hauser L."/>
            <person name="Kyrpides N."/>
            <person name="Mikhailova N."/>
            <person name="Cozen A.E."/>
            <person name="Fitz-Gibbon S.T."/>
            <person name="House C.H."/>
            <person name="Saltikov C."/>
            <person name="Lowe T.M."/>
            <person name="Richardson P."/>
        </authorList>
    </citation>
    <scope>NUCLEOTIDE SEQUENCE [LARGE SCALE GENOMIC DNA]</scope>
    <source>
        <strain>DSM 21063 / JCM 11548 / VA1</strain>
    </source>
</reference>
<proteinExistence type="inferred from homology"/>